<reference key="1">
    <citation type="journal article" date="2006" name="Proc. Natl. Acad. Sci. U.S.A.">
        <title>Burkholderia xenovorans LB400 harbors a multi-replicon, 9.73-Mbp genome shaped for versatility.</title>
        <authorList>
            <person name="Chain P.S.G."/>
            <person name="Denef V.J."/>
            <person name="Konstantinidis K.T."/>
            <person name="Vergez L.M."/>
            <person name="Agullo L."/>
            <person name="Reyes V.L."/>
            <person name="Hauser L."/>
            <person name="Cordova M."/>
            <person name="Gomez L."/>
            <person name="Gonzalez M."/>
            <person name="Land M."/>
            <person name="Lao V."/>
            <person name="Larimer F."/>
            <person name="LiPuma J.J."/>
            <person name="Mahenthiralingam E."/>
            <person name="Malfatti S.A."/>
            <person name="Marx C.J."/>
            <person name="Parnell J.J."/>
            <person name="Ramette A."/>
            <person name="Richardson P."/>
            <person name="Seeger M."/>
            <person name="Smith D."/>
            <person name="Spilker T."/>
            <person name="Sul W.J."/>
            <person name="Tsoi T.V."/>
            <person name="Ulrich L.E."/>
            <person name="Zhulin I.B."/>
            <person name="Tiedje J.M."/>
        </authorList>
    </citation>
    <scope>NUCLEOTIDE SEQUENCE [LARGE SCALE GENOMIC DNA]</scope>
    <source>
        <strain>LB400</strain>
    </source>
</reference>
<accession>Q13VL1</accession>
<feature type="chain" id="PRO_0000267276" description="7-methyl-GTP pyrophosphatase">
    <location>
        <begin position="1"/>
        <end position="205"/>
    </location>
</feature>
<feature type="active site" description="Proton acceptor" evidence="1">
    <location>
        <position position="79"/>
    </location>
</feature>
<feature type="site" description="Important for substrate specificity" evidence="1">
    <location>
        <position position="19"/>
    </location>
</feature>
<feature type="site" description="Important for substrate specificity" evidence="1">
    <location>
        <position position="80"/>
    </location>
</feature>
<feature type="site" description="Important for substrate specificity" evidence="1">
    <location>
        <position position="164"/>
    </location>
</feature>
<dbReference type="EC" id="3.6.1.-" evidence="1"/>
<dbReference type="EMBL" id="CP000270">
    <property type="protein sequence ID" value="ABE31878.1"/>
    <property type="molecule type" value="Genomic_DNA"/>
</dbReference>
<dbReference type="RefSeq" id="WP_011489398.1">
    <property type="nucleotide sequence ID" value="NC_007951.1"/>
</dbReference>
<dbReference type="SMR" id="Q13VL1"/>
<dbReference type="STRING" id="266265.Bxe_A1068"/>
<dbReference type="KEGG" id="bxb:DR64_3231"/>
<dbReference type="KEGG" id="bxe:Bxe_A1068"/>
<dbReference type="PATRIC" id="fig|266265.5.peg.3508"/>
<dbReference type="eggNOG" id="COG0424">
    <property type="taxonomic scope" value="Bacteria"/>
</dbReference>
<dbReference type="OrthoDB" id="9813694at2"/>
<dbReference type="Proteomes" id="UP000001817">
    <property type="component" value="Chromosome 1"/>
</dbReference>
<dbReference type="GO" id="GO:0005737">
    <property type="term" value="C:cytoplasm"/>
    <property type="evidence" value="ECO:0007669"/>
    <property type="project" value="UniProtKB-SubCell"/>
</dbReference>
<dbReference type="GO" id="GO:0047429">
    <property type="term" value="F:nucleoside triphosphate diphosphatase activity"/>
    <property type="evidence" value="ECO:0007669"/>
    <property type="project" value="InterPro"/>
</dbReference>
<dbReference type="GO" id="GO:0009117">
    <property type="term" value="P:nucleotide metabolic process"/>
    <property type="evidence" value="ECO:0007669"/>
    <property type="project" value="UniProtKB-KW"/>
</dbReference>
<dbReference type="CDD" id="cd00555">
    <property type="entry name" value="Maf"/>
    <property type="match status" value="1"/>
</dbReference>
<dbReference type="Gene3D" id="3.90.950.10">
    <property type="match status" value="1"/>
</dbReference>
<dbReference type="HAMAP" id="MF_00528">
    <property type="entry name" value="Maf"/>
    <property type="match status" value="1"/>
</dbReference>
<dbReference type="InterPro" id="IPR029001">
    <property type="entry name" value="ITPase-like_fam"/>
</dbReference>
<dbReference type="InterPro" id="IPR003697">
    <property type="entry name" value="Maf-like"/>
</dbReference>
<dbReference type="NCBIfam" id="TIGR00172">
    <property type="entry name" value="maf"/>
    <property type="match status" value="1"/>
</dbReference>
<dbReference type="PANTHER" id="PTHR43213">
    <property type="entry name" value="BIFUNCTIONAL DTTP/UTP PYROPHOSPHATASE/METHYLTRANSFERASE PROTEIN-RELATED"/>
    <property type="match status" value="1"/>
</dbReference>
<dbReference type="PANTHER" id="PTHR43213:SF5">
    <property type="entry name" value="BIFUNCTIONAL DTTP_UTP PYROPHOSPHATASE_METHYLTRANSFERASE PROTEIN-RELATED"/>
    <property type="match status" value="1"/>
</dbReference>
<dbReference type="Pfam" id="PF02545">
    <property type="entry name" value="Maf"/>
    <property type="match status" value="1"/>
</dbReference>
<dbReference type="PIRSF" id="PIRSF006305">
    <property type="entry name" value="Maf"/>
    <property type="match status" value="1"/>
</dbReference>
<dbReference type="SUPFAM" id="SSF52972">
    <property type="entry name" value="ITPase-like"/>
    <property type="match status" value="1"/>
</dbReference>
<gene>
    <name type="ordered locus">Bxeno_A3340</name>
    <name type="ORF">Bxe_A1068</name>
</gene>
<name>NTPPB_PARXL</name>
<organism>
    <name type="scientific">Paraburkholderia xenovorans (strain LB400)</name>
    <dbReference type="NCBI Taxonomy" id="266265"/>
    <lineage>
        <taxon>Bacteria</taxon>
        <taxon>Pseudomonadati</taxon>
        <taxon>Pseudomonadota</taxon>
        <taxon>Betaproteobacteria</taxon>
        <taxon>Burkholderiales</taxon>
        <taxon>Burkholderiaceae</taxon>
        <taxon>Paraburkholderia</taxon>
    </lineage>
</organism>
<keyword id="KW-0963">Cytoplasm</keyword>
<keyword id="KW-0378">Hydrolase</keyword>
<keyword id="KW-0546">Nucleotide metabolism</keyword>
<keyword id="KW-1185">Reference proteome</keyword>
<protein>
    <recommendedName>
        <fullName evidence="1">7-methyl-GTP pyrophosphatase</fullName>
        <shortName evidence="1">m(7)GTP pyrophosphatase</shortName>
        <ecNumber evidence="1">3.6.1.-</ecNumber>
    </recommendedName>
</protein>
<proteinExistence type="inferred from homology"/>
<comment type="function">
    <text evidence="1">Nucleoside triphosphate pyrophosphatase that hydrolyzes 7-methyl-GTP (m(7)GTP). May have a dual role in cell division arrest and in preventing the incorporation of modified nucleotides into cellular nucleic acids.</text>
</comment>
<comment type="catalytic activity">
    <reaction evidence="1">
        <text>N(7)-methyl-GTP + H2O = N(7)-methyl-GMP + diphosphate + H(+)</text>
        <dbReference type="Rhea" id="RHEA:58744"/>
        <dbReference type="ChEBI" id="CHEBI:15377"/>
        <dbReference type="ChEBI" id="CHEBI:15378"/>
        <dbReference type="ChEBI" id="CHEBI:33019"/>
        <dbReference type="ChEBI" id="CHEBI:58285"/>
        <dbReference type="ChEBI" id="CHEBI:87133"/>
    </reaction>
</comment>
<comment type="cofactor">
    <cofactor evidence="1">
        <name>a divalent metal cation</name>
        <dbReference type="ChEBI" id="CHEBI:60240"/>
    </cofactor>
</comment>
<comment type="subcellular location">
    <subcellularLocation>
        <location evidence="1">Cytoplasm</location>
    </subcellularLocation>
</comment>
<comment type="similarity">
    <text evidence="1">Belongs to the Maf family. YceF subfamily.</text>
</comment>
<sequence length="205" mass="21489">MSDSLNRPPRLILASSSPYRRELLQRLRVPFDVAVPAIDETPLAGETPEVTALRLAQAKARAVAGGLGAGVAALVIGSDQVATYDGLQIGKPGTHANALAQLQAMRGREVQFHSALCLFDSRSGTVQAVDVVTRVQFRDLPDAALEAYLLAETPYDVAGSAKSEGLGIALLEAIHSDDPTALVGLPLIALSRMLLAVGYPLLGAQ</sequence>
<evidence type="ECO:0000255" key="1">
    <source>
        <dbReference type="HAMAP-Rule" id="MF_00528"/>
    </source>
</evidence>